<comment type="function">
    <text>Not known; seems to contribute to the tellurium resistance (Ter) mechanism. Also involved in phage inhibition (Phi) and colicin resistance (PacB).</text>
</comment>
<comment type="similarity">
    <text evidence="1">Belongs to the CAPAB/TerDEXZ family.</text>
</comment>
<feature type="chain" id="PRO_0000170782" description="Tellurium resistance protein TerZ">
    <location>
        <begin position="1"/>
        <end position="193"/>
    </location>
</feature>
<proteinExistence type="inferred from homology"/>
<name>TERZ_SERMA</name>
<gene>
    <name type="primary">terZ</name>
</gene>
<protein>
    <recommendedName>
        <fullName>Tellurium resistance protein TerZ</fullName>
    </recommendedName>
</protein>
<geneLocation type="plasmid">
    <name>IncHI2 R478</name>
</geneLocation>
<reference key="1">
    <citation type="journal article" date="1995" name="J. Bacteriol.">
        <title>Phage inhibition, colicin resistance, and tellurite resistance are encoded by a single cluster of genes on the IncHI2 plasmid R478.</title>
        <authorList>
            <person name="Whelan K.F."/>
            <person name="Colleran E."/>
            <person name="Taylor D.E."/>
        </authorList>
    </citation>
    <scope>NUCLEOTIDE SEQUENCE [GENOMIC DNA]</scope>
</reference>
<organism>
    <name type="scientific">Serratia marcescens</name>
    <dbReference type="NCBI Taxonomy" id="615"/>
    <lineage>
        <taxon>Bacteria</taxon>
        <taxon>Pseudomonadati</taxon>
        <taxon>Pseudomonadota</taxon>
        <taxon>Gammaproteobacteria</taxon>
        <taxon>Enterobacterales</taxon>
        <taxon>Yersiniaceae</taxon>
        <taxon>Serratia</taxon>
    </lineage>
</organism>
<sequence>MVSLVKNQTVSLSKESSALSQLHFGLGWDPVKKKGLLGGLFGGNDSIDLDAGCVLMDSTGKTIDTIWFRKLESTCGAVVHSGDNLTGEGDGDDEVINVNLSRLPANVEYLAFTVNSFRGQSFNDVENAFCRVVDQTGKELARYKLTEQGSHTGIVISSLRRNNGNWDFTALGHACRGRTIDDMHSDIVSAVIR</sequence>
<keyword id="KW-0614">Plasmid</keyword>
<keyword id="KW-0778">Tellurium resistance</keyword>
<accession>Q52353</accession>
<dbReference type="EMBL" id="U59239">
    <property type="protein sequence ID" value="AAA86846.1"/>
    <property type="molecule type" value="Genomic_DNA"/>
</dbReference>
<dbReference type="RefSeq" id="NP_941149.1">
    <property type="nucleotide sequence ID" value="NC_005211.1"/>
</dbReference>
<dbReference type="RefSeq" id="WP_000254137.1">
    <property type="nucleotide sequence ID" value="NZ_VOMJ01000014.1"/>
</dbReference>
<dbReference type="SMR" id="Q52353"/>
<dbReference type="GO" id="GO:0046690">
    <property type="term" value="P:response to tellurium ion"/>
    <property type="evidence" value="ECO:0007669"/>
    <property type="project" value="UniProtKB-KW"/>
</dbReference>
<dbReference type="CDD" id="cd06974">
    <property type="entry name" value="TerD_like"/>
    <property type="match status" value="1"/>
</dbReference>
<dbReference type="Gene3D" id="2.60.60.30">
    <property type="entry name" value="sav2460 like domains"/>
    <property type="match status" value="1"/>
</dbReference>
<dbReference type="InterPro" id="IPR051324">
    <property type="entry name" value="Stress/Tellurium_Resist"/>
</dbReference>
<dbReference type="InterPro" id="IPR003325">
    <property type="entry name" value="TerD"/>
</dbReference>
<dbReference type="PANTHER" id="PTHR32097">
    <property type="entry name" value="CAMP-BINDING PROTEIN 1-RELATED"/>
    <property type="match status" value="1"/>
</dbReference>
<dbReference type="PANTHER" id="PTHR32097:SF17">
    <property type="entry name" value="CAMP-BINDING PROTEIN 1-RELATED"/>
    <property type="match status" value="1"/>
</dbReference>
<dbReference type="Pfam" id="PF02342">
    <property type="entry name" value="TerD"/>
    <property type="match status" value="1"/>
</dbReference>
<evidence type="ECO:0000305" key="1"/>